<keyword id="KW-0002">3D-structure</keyword>
<keyword id="KW-0020">Allergen</keyword>
<keyword id="KW-0903">Direct protein sequencing</keyword>
<keyword id="KW-1015">Disulfide bond</keyword>
<keyword id="KW-0325">Glycoprotein</keyword>
<keyword id="KW-0378">Hydrolase</keyword>
<keyword id="KW-0645">Protease</keyword>
<keyword id="KW-0964">Secreted</keyword>
<keyword id="KW-0732">Signal</keyword>
<keyword id="KW-0788">Thiol protease</keyword>
<keyword id="KW-0865">Zymogen</keyword>
<sequence length="321" mass="36435">MKFVLAIASLLVLSTVYARPASIKTFEEFKKAFNKNYATVEEEEVARKNFLESLKYVEANKGAINHLSDLSLDEFKNRYLMSAEAFEQLKTQFDLNAETSACRINSVNVPSELDLRSLRTVTPIRMQGGCGSCWAFSGVAATESAYLAYRNTSLDLSEQELVDCASQHGCHGDTIPRGIEYIQQNGVVEERSYPYVAREQRCRRPNSQHYGISNYCQIYPPDVKQIREALTQTHTAIAVIIGIKDLRAFQHYDGRTIIQHDNGYQPNYHAVNIVGYGSTQGDDYWIVRNSWDTTWGDSGYGYFQAGNNLMMIEQYPYVVIM</sequence>
<comment type="function">
    <text>Thiol protease that hydrolyzes proteins, with a preference for Phe or basic residues.</text>
</comment>
<comment type="catalytic activity">
    <reaction>
        <text>Broad endopeptidase specificity.</text>
        <dbReference type="EC" id="3.4.22.65"/>
    </reaction>
</comment>
<comment type="subunit">
    <text evidence="6">Monomer.</text>
</comment>
<comment type="subcellular location">
    <subcellularLocation>
        <location>Secreted</location>
    </subcellularLocation>
</comment>
<comment type="allergen">
    <text>Causes an allergic reaction in human. Common symptoms of mite allergy are bronchial asthma, allergic rhinitis and conjunctivitis.</text>
</comment>
<comment type="similarity">
    <text evidence="3 4 5">Belongs to the peptidase C1 family.</text>
</comment>
<name>PEPT1_DERFA</name>
<gene>
    <name type="primary">DERF1</name>
</gene>
<dbReference type="EC" id="3.4.22.65"/>
<dbReference type="EMBL" id="X65196">
    <property type="protein sequence ID" value="CAA46316.1"/>
    <property type="molecule type" value="Genomic_DNA"/>
</dbReference>
<dbReference type="PIR" id="A27634">
    <property type="entry name" value="A27634"/>
</dbReference>
<dbReference type="PIR" id="A61500">
    <property type="entry name" value="A61500"/>
</dbReference>
<dbReference type="PDB" id="5VPK">
    <property type="method" value="X-ray"/>
    <property type="resolution" value="2.00 A"/>
    <property type="chains" value="A/B/C=99-321"/>
</dbReference>
<dbReference type="PDB" id="5VPL">
    <property type="method" value="X-ray"/>
    <property type="resolution" value="1.90 A"/>
    <property type="chains" value="A=99-321"/>
</dbReference>
<dbReference type="PDBsum" id="5VPK"/>
<dbReference type="PDBsum" id="5VPL"/>
<dbReference type="SMR" id="P16311"/>
<dbReference type="ChEMBL" id="CHEMBL3351205"/>
<dbReference type="Allergome" id="295">
    <property type="allergen name" value="Der f 1"/>
</dbReference>
<dbReference type="Allergome" id="5896">
    <property type="allergen name" value="Der f 1.0106"/>
</dbReference>
<dbReference type="MEROPS" id="C01.073"/>
<dbReference type="GlyCosmos" id="P16311">
    <property type="glycosylation" value="1 site, No reported glycans"/>
</dbReference>
<dbReference type="iPTMnet" id="P16311"/>
<dbReference type="ABCD" id="P16311">
    <property type="antibodies" value="1 sequenced antibody"/>
</dbReference>
<dbReference type="OrthoDB" id="6484923at2759"/>
<dbReference type="BRENDA" id="3.4.22.65">
    <property type="organism ID" value="1872"/>
</dbReference>
<dbReference type="GO" id="GO:0005576">
    <property type="term" value="C:extracellular region"/>
    <property type="evidence" value="ECO:0007669"/>
    <property type="project" value="UniProtKB-SubCell"/>
</dbReference>
<dbReference type="GO" id="GO:0008234">
    <property type="term" value="F:cysteine-type peptidase activity"/>
    <property type="evidence" value="ECO:0007669"/>
    <property type="project" value="UniProtKB-KW"/>
</dbReference>
<dbReference type="GO" id="GO:0006508">
    <property type="term" value="P:proteolysis"/>
    <property type="evidence" value="ECO:0007669"/>
    <property type="project" value="UniProtKB-KW"/>
</dbReference>
<dbReference type="CDD" id="cd02248">
    <property type="entry name" value="Peptidase_C1A"/>
    <property type="match status" value="1"/>
</dbReference>
<dbReference type="Gene3D" id="3.90.70.10">
    <property type="entry name" value="Cysteine proteinases"/>
    <property type="match status" value="1"/>
</dbReference>
<dbReference type="InterPro" id="IPR038765">
    <property type="entry name" value="Papain-like_cys_pep_sf"/>
</dbReference>
<dbReference type="InterPro" id="IPR025661">
    <property type="entry name" value="Pept_asp_AS"/>
</dbReference>
<dbReference type="InterPro" id="IPR000169">
    <property type="entry name" value="Pept_cys_AS"/>
</dbReference>
<dbReference type="InterPro" id="IPR025660">
    <property type="entry name" value="Pept_his_AS"/>
</dbReference>
<dbReference type="InterPro" id="IPR013128">
    <property type="entry name" value="Peptidase_C1A"/>
</dbReference>
<dbReference type="InterPro" id="IPR000668">
    <property type="entry name" value="Peptidase_C1A_C"/>
</dbReference>
<dbReference type="InterPro" id="IPR039417">
    <property type="entry name" value="Peptidase_C1A_papain-like"/>
</dbReference>
<dbReference type="InterPro" id="IPR013201">
    <property type="entry name" value="Prot_inhib_I29"/>
</dbReference>
<dbReference type="PANTHER" id="PTHR12411">
    <property type="entry name" value="CYSTEINE PROTEASE FAMILY C1-RELATED"/>
    <property type="match status" value="1"/>
</dbReference>
<dbReference type="Pfam" id="PF08246">
    <property type="entry name" value="Inhibitor_I29"/>
    <property type="match status" value="1"/>
</dbReference>
<dbReference type="Pfam" id="PF00112">
    <property type="entry name" value="Peptidase_C1"/>
    <property type="match status" value="1"/>
</dbReference>
<dbReference type="PRINTS" id="PR00705">
    <property type="entry name" value="PAPAIN"/>
</dbReference>
<dbReference type="SMART" id="SM00848">
    <property type="entry name" value="Inhibitor_I29"/>
    <property type="match status" value="1"/>
</dbReference>
<dbReference type="SMART" id="SM00645">
    <property type="entry name" value="Pept_C1"/>
    <property type="match status" value="1"/>
</dbReference>
<dbReference type="SUPFAM" id="SSF54001">
    <property type="entry name" value="Cysteine proteinases"/>
    <property type="match status" value="1"/>
</dbReference>
<dbReference type="PROSITE" id="PS00640">
    <property type="entry name" value="THIOL_PROTEASE_ASN"/>
    <property type="match status" value="1"/>
</dbReference>
<dbReference type="PROSITE" id="PS00139">
    <property type="entry name" value="THIOL_PROTEASE_CYS"/>
    <property type="match status" value="1"/>
</dbReference>
<dbReference type="PROSITE" id="PS00639">
    <property type="entry name" value="THIOL_PROTEASE_HIS"/>
    <property type="match status" value="1"/>
</dbReference>
<organism>
    <name type="scientific">Dermatophagoides farinae</name>
    <name type="common">American house dust mite</name>
    <dbReference type="NCBI Taxonomy" id="6954"/>
    <lineage>
        <taxon>Eukaryota</taxon>
        <taxon>Metazoa</taxon>
        <taxon>Ecdysozoa</taxon>
        <taxon>Arthropoda</taxon>
        <taxon>Chelicerata</taxon>
        <taxon>Arachnida</taxon>
        <taxon>Acari</taxon>
        <taxon>Acariformes</taxon>
        <taxon>Sarcoptiformes</taxon>
        <taxon>Astigmata</taxon>
        <taxon>Psoroptidia</taxon>
        <taxon>Analgoidea</taxon>
        <taxon>Pyroglyphidae</taxon>
        <taxon>Dermatophagoidinae</taxon>
        <taxon>Dermatophagoides</taxon>
    </lineage>
</organism>
<reference key="1">
    <citation type="journal article" date="1991" name="Clin. Exp. Allergy">
        <title>Sequence analysis of cDNA coding for a major house dust mite allergen, Der f I.</title>
        <authorList>
            <person name="Dilworth R.J."/>
            <person name="Chua K.Y."/>
            <person name="Thomas W.R."/>
        </authorList>
    </citation>
    <scope>NUCLEOTIDE SEQUENCE [GENOMIC DNA]</scope>
</reference>
<reference key="2">
    <citation type="submission" date="1992-03" db="EMBL/GenBank/DDBJ databases">
        <authorList>
            <person name="Kent N."/>
            <person name="Hill M.R."/>
            <person name="Keen J.N."/>
            <person name="Holland P.W."/>
            <person name="Hart B.J."/>
        </authorList>
    </citation>
    <scope>NUCLEOTIDE SEQUENCE [GENOMIC DNA] OF 98-309</scope>
</reference>
<reference key="3">
    <citation type="journal article" date="1988" name="J. Immunol.">
        <title>The binding of mouse hybridoma and human IgE antibodies to the major fecal allergen, Der p I, of Dermatophagoides pteronyssinus. Relative binding site location and species specificity studied by solid-phase inhibition assays with radiolabeled antigen.</title>
        <authorList>
            <person name="Lind P."/>
            <person name="Hansen O.C."/>
            <person name="Horn N."/>
        </authorList>
    </citation>
    <scope>PROTEIN SEQUENCE OF 99-128</scope>
</reference>
<reference key="4">
    <citation type="journal article" date="2009" name="J. Mol. Biol.">
        <title>Crystal structures of mite allergens Der f 1 and Der p 1 reveal differences in surface-exposed residues that may influence antibody binding.</title>
        <authorList>
            <person name="Chruszcz M."/>
            <person name="Chapman M.D."/>
            <person name="Vailes L.D."/>
            <person name="Stura E.A."/>
            <person name="Saint-Remy J.M."/>
            <person name="Minor W."/>
            <person name="Pomes A."/>
        </authorList>
    </citation>
    <scope>X-RAY CRYSTALLOGRAPHY (2.0 ANGSTROMS) OF 99-321</scope>
    <scope>SUBUNIT</scope>
    <scope>DISULFIDE BONDS</scope>
    <scope>GLYCOSYLATION AT ASN-151</scope>
</reference>
<accession>P16311</accession>
<proteinExistence type="evidence at protein level"/>
<feature type="signal peptide" evidence="2">
    <location>
        <begin position="1"/>
        <end position="18"/>
    </location>
</feature>
<feature type="propeptide" id="PRO_0000026374" description="Activation peptide" evidence="7">
    <location>
        <begin position="19"/>
        <end position="98"/>
    </location>
</feature>
<feature type="chain" id="PRO_0000026375" description="Peptidase 1">
    <location>
        <begin position="99"/>
        <end position="321"/>
    </location>
</feature>
<feature type="active site" evidence="1">
    <location>
        <position position="133"/>
    </location>
</feature>
<feature type="active site" evidence="1">
    <location>
        <position position="269"/>
    </location>
</feature>
<feature type="active site" evidence="1">
    <location>
        <position position="288"/>
    </location>
</feature>
<feature type="glycosylation site" description="N-linked (GlcNAc...) asparagine" evidence="6">
    <location>
        <position position="151"/>
    </location>
</feature>
<feature type="disulfide bond" evidence="6">
    <location>
        <begin position="102"/>
        <end position="216"/>
    </location>
</feature>
<feature type="disulfide bond" evidence="6">
    <location>
        <begin position="130"/>
        <end position="170"/>
    </location>
</feature>
<feature type="disulfide bond" evidence="6">
    <location>
        <begin position="164"/>
        <end position="202"/>
    </location>
</feature>
<feature type="sequence conflict" description="In Ref. 2; CAA46316." evidence="8" ref="2">
    <original>R</original>
    <variation>Q</variation>
    <location>
        <position position="201"/>
    </location>
</feature>
<feature type="sequence conflict" description="In Ref. 2; CAA46316." evidence="8" ref="2">
    <original>D</original>
    <variation>V</variation>
    <location>
        <position position="282"/>
    </location>
</feature>
<feature type="turn" evidence="9">
    <location>
        <begin position="115"/>
        <end position="119"/>
    </location>
</feature>
<feature type="strand" evidence="9">
    <location>
        <begin position="129"/>
        <end position="131"/>
    </location>
</feature>
<feature type="helix" evidence="9">
    <location>
        <begin position="133"/>
        <end position="150"/>
    </location>
</feature>
<feature type="helix" evidence="9">
    <location>
        <begin position="158"/>
        <end position="164"/>
    </location>
</feature>
<feature type="helix" evidence="9">
    <location>
        <begin position="175"/>
        <end position="185"/>
    </location>
</feature>
<feature type="helix" evidence="9">
    <location>
        <begin position="190"/>
        <end position="192"/>
    </location>
</feature>
<feature type="strand" evidence="9">
    <location>
        <begin position="213"/>
        <end position="217"/>
    </location>
</feature>
<feature type="helix" evidence="9">
    <location>
        <begin position="223"/>
        <end position="233"/>
    </location>
</feature>
<feature type="strand" evidence="9">
    <location>
        <begin position="237"/>
        <end position="244"/>
    </location>
</feature>
<feature type="helix" evidence="9">
    <location>
        <begin position="246"/>
        <end position="250"/>
    </location>
</feature>
<feature type="strand" evidence="9">
    <location>
        <begin position="254"/>
        <end position="256"/>
    </location>
</feature>
<feature type="strand" evidence="9">
    <location>
        <begin position="263"/>
        <end position="265"/>
    </location>
</feature>
<feature type="strand" evidence="9">
    <location>
        <begin position="267"/>
        <end position="279"/>
    </location>
</feature>
<feature type="strand" evidence="9">
    <location>
        <begin position="282"/>
        <end position="288"/>
    </location>
</feature>
<feature type="strand" evidence="9">
    <location>
        <begin position="300"/>
        <end position="304"/>
    </location>
</feature>
<feature type="helix" evidence="9">
    <location>
        <begin position="309"/>
        <end position="311"/>
    </location>
</feature>
<feature type="turn" evidence="9">
    <location>
        <begin position="312"/>
        <end position="314"/>
    </location>
</feature>
<feature type="strand" evidence="9">
    <location>
        <begin position="317"/>
        <end position="320"/>
    </location>
</feature>
<evidence type="ECO:0000250" key="1"/>
<evidence type="ECO:0000255" key="2"/>
<evidence type="ECO:0000255" key="3">
    <source>
        <dbReference type="PROSITE-ProRule" id="PRU10088"/>
    </source>
</evidence>
<evidence type="ECO:0000255" key="4">
    <source>
        <dbReference type="PROSITE-ProRule" id="PRU10089"/>
    </source>
</evidence>
<evidence type="ECO:0000255" key="5">
    <source>
        <dbReference type="PROSITE-ProRule" id="PRU10090"/>
    </source>
</evidence>
<evidence type="ECO:0000269" key="6">
    <source>
    </source>
</evidence>
<evidence type="ECO:0000269" key="7">
    <source>
    </source>
</evidence>
<evidence type="ECO:0000305" key="8"/>
<evidence type="ECO:0007829" key="9">
    <source>
        <dbReference type="PDB" id="5VPL"/>
    </source>
</evidence>
<protein>
    <recommendedName>
        <fullName>Peptidase 1</fullName>
        <ecNumber>3.4.22.65</ecNumber>
    </recommendedName>
    <alternativeName>
        <fullName>Allergen Der f I</fullName>
    </alternativeName>
    <alternativeName>
        <fullName>Major mite fecal allergen Der f 1</fullName>
    </alternativeName>
    <allergenName>Der f 1</allergenName>
</protein>